<keyword id="KW-0067">ATP-binding</keyword>
<keyword id="KW-0963">Cytoplasm</keyword>
<keyword id="KW-0206">Cytoskeleton</keyword>
<keyword id="KW-0418">Kinase</keyword>
<keyword id="KW-0547">Nucleotide-binding</keyword>
<keyword id="KW-1185">Reference proteome</keyword>
<keyword id="KW-0723">Serine/threonine-protein kinase</keyword>
<keyword id="KW-0808">Transferase</keyword>
<keyword id="KW-0832">Ubl conjugation</keyword>
<dbReference type="EC" id="2.7.11.21" evidence="2"/>
<dbReference type="EMBL" id="BC060363">
    <property type="protein sequence ID" value="AAH60363.1"/>
    <property type="molecule type" value="mRNA"/>
</dbReference>
<dbReference type="RefSeq" id="NP_001083146.1">
    <property type="nucleotide sequence ID" value="NM_001089677.1"/>
</dbReference>
<dbReference type="SMR" id="Q6PAD2"/>
<dbReference type="DNASU" id="398770"/>
<dbReference type="GeneID" id="398770"/>
<dbReference type="KEGG" id="xla:398770"/>
<dbReference type="AGR" id="Xenbase:XB-GENE-866273"/>
<dbReference type="CTD" id="398770"/>
<dbReference type="Xenbase" id="XB-GENE-866273">
    <property type="gene designation" value="plk4.L"/>
</dbReference>
<dbReference type="OrthoDB" id="10004143at2759"/>
<dbReference type="Proteomes" id="UP000186698">
    <property type="component" value="Chromosome 1L"/>
</dbReference>
<dbReference type="Bgee" id="398770">
    <property type="expression patterns" value="Expressed in testis and 17 other cell types or tissues"/>
</dbReference>
<dbReference type="GO" id="GO:0005814">
    <property type="term" value="C:centriole"/>
    <property type="evidence" value="ECO:0000250"/>
    <property type="project" value="UniProtKB"/>
</dbReference>
<dbReference type="GO" id="GO:0005813">
    <property type="term" value="C:centrosome"/>
    <property type="evidence" value="ECO:0000250"/>
    <property type="project" value="UniProtKB"/>
</dbReference>
<dbReference type="GO" id="GO:0005737">
    <property type="term" value="C:cytoplasm"/>
    <property type="evidence" value="ECO:0007669"/>
    <property type="project" value="UniProtKB-KW"/>
</dbReference>
<dbReference type="GO" id="GO:0098536">
    <property type="term" value="C:deuterosome"/>
    <property type="evidence" value="ECO:0000314"/>
    <property type="project" value="UniProtKB"/>
</dbReference>
<dbReference type="GO" id="GO:0005730">
    <property type="term" value="C:nucleolus"/>
    <property type="evidence" value="ECO:0000250"/>
    <property type="project" value="UniProtKB"/>
</dbReference>
<dbReference type="GO" id="GO:0005634">
    <property type="term" value="C:nucleus"/>
    <property type="evidence" value="ECO:0000318"/>
    <property type="project" value="GO_Central"/>
</dbReference>
<dbReference type="GO" id="GO:0005524">
    <property type="term" value="F:ATP binding"/>
    <property type="evidence" value="ECO:0007669"/>
    <property type="project" value="UniProtKB-KW"/>
</dbReference>
<dbReference type="GO" id="GO:0106310">
    <property type="term" value="F:protein serine kinase activity"/>
    <property type="evidence" value="ECO:0007669"/>
    <property type="project" value="RHEA"/>
</dbReference>
<dbReference type="GO" id="GO:0004674">
    <property type="term" value="F:protein serine/threonine kinase activity"/>
    <property type="evidence" value="ECO:0000250"/>
    <property type="project" value="UniProtKB"/>
</dbReference>
<dbReference type="GO" id="GO:0007099">
    <property type="term" value="P:centriole replication"/>
    <property type="evidence" value="ECO:0000250"/>
    <property type="project" value="UniProtKB"/>
</dbReference>
<dbReference type="GO" id="GO:0098535">
    <property type="term" value="P:de novo centriole assembly involved in multi-ciliated epithelial cell differentiation"/>
    <property type="evidence" value="ECO:0000250"/>
    <property type="project" value="UniProtKB"/>
</dbReference>
<dbReference type="GO" id="GO:0046601">
    <property type="term" value="P:positive regulation of centriole replication"/>
    <property type="evidence" value="ECO:0000250"/>
    <property type="project" value="UniProtKB"/>
</dbReference>
<dbReference type="CDD" id="cd13114">
    <property type="entry name" value="POLO_box_Plk4_1"/>
    <property type="match status" value="1"/>
</dbReference>
<dbReference type="CDD" id="cd13115">
    <property type="entry name" value="POLO_box_Plk4_2"/>
    <property type="match status" value="1"/>
</dbReference>
<dbReference type="CDD" id="cd13116">
    <property type="entry name" value="POLO_box_Plk4_3"/>
    <property type="match status" value="1"/>
</dbReference>
<dbReference type="CDD" id="cd14186">
    <property type="entry name" value="STKc_PLK4"/>
    <property type="match status" value="1"/>
</dbReference>
<dbReference type="FunFam" id="3.30.200.20:FF:000221">
    <property type="entry name" value="Putative serine/threonine-protein kinase PLK4"/>
    <property type="match status" value="1"/>
</dbReference>
<dbReference type="FunFam" id="1.10.510.10:FF:000576">
    <property type="entry name" value="Serine/threonine-protein kinase PLK4"/>
    <property type="match status" value="1"/>
</dbReference>
<dbReference type="FunFam" id="2.40.50.930:FF:000001">
    <property type="entry name" value="Serine/threonine-protein kinase PLK4"/>
    <property type="match status" value="1"/>
</dbReference>
<dbReference type="FunFam" id="3.30.1120.130:FF:000001">
    <property type="entry name" value="serine/threonine-protein kinase PLK4 isoform X1"/>
    <property type="match status" value="1"/>
</dbReference>
<dbReference type="FunFam" id="3.30.1120.120:FF:000001">
    <property type="entry name" value="serine/threonine-protein kinase PLK4 isoform X2"/>
    <property type="match status" value="1"/>
</dbReference>
<dbReference type="Gene3D" id="2.40.50.930">
    <property type="match status" value="1"/>
</dbReference>
<dbReference type="Gene3D" id="3.30.1120.120">
    <property type="match status" value="1"/>
</dbReference>
<dbReference type="Gene3D" id="3.30.1120.130">
    <property type="match status" value="1"/>
</dbReference>
<dbReference type="Gene3D" id="3.30.200.20">
    <property type="entry name" value="Phosphorylase Kinase, domain 1"/>
    <property type="match status" value="1"/>
</dbReference>
<dbReference type="Gene3D" id="1.10.510.10">
    <property type="entry name" value="Transferase(Phosphotransferase) domain 1"/>
    <property type="match status" value="1"/>
</dbReference>
<dbReference type="InterPro" id="IPR011009">
    <property type="entry name" value="Kinase-like_dom_sf"/>
</dbReference>
<dbReference type="InterPro" id="IPR047108">
    <property type="entry name" value="Plk4-like_POLO_box_2_sf"/>
</dbReference>
<dbReference type="InterPro" id="IPR000959">
    <property type="entry name" value="POLO_box_dom"/>
</dbReference>
<dbReference type="InterPro" id="IPR033699">
    <property type="entry name" value="POLO_box_Plk4_1"/>
</dbReference>
<dbReference type="InterPro" id="IPR033698">
    <property type="entry name" value="POLO_box_Plk4_2"/>
</dbReference>
<dbReference type="InterPro" id="IPR033696">
    <property type="entry name" value="POLO_box_Plk4_C"/>
</dbReference>
<dbReference type="InterPro" id="IPR000719">
    <property type="entry name" value="Prot_kinase_dom"/>
</dbReference>
<dbReference type="InterPro" id="IPR017441">
    <property type="entry name" value="Protein_kinase_ATP_BS"/>
</dbReference>
<dbReference type="InterPro" id="IPR046437">
    <property type="entry name" value="Ser_Thr-PK_POLO_box_1_sf"/>
</dbReference>
<dbReference type="InterPro" id="IPR008266">
    <property type="entry name" value="Tyr_kinase_AS"/>
</dbReference>
<dbReference type="PANTHER" id="PTHR24345">
    <property type="entry name" value="SERINE/THREONINE-PROTEIN KINASE PLK"/>
    <property type="match status" value="1"/>
</dbReference>
<dbReference type="PANTHER" id="PTHR24345:SF89">
    <property type="entry name" value="SERINE_THREONINE-PROTEIN KINASE PLK4"/>
    <property type="match status" value="1"/>
</dbReference>
<dbReference type="Pfam" id="PF00069">
    <property type="entry name" value="Pkinase"/>
    <property type="match status" value="1"/>
</dbReference>
<dbReference type="Pfam" id="PF18190">
    <property type="entry name" value="Plk4_PB1"/>
    <property type="match status" value="1"/>
</dbReference>
<dbReference type="Pfam" id="PF18409">
    <property type="entry name" value="Plk4_PB2"/>
    <property type="match status" value="1"/>
</dbReference>
<dbReference type="SUPFAM" id="SSF82615">
    <property type="entry name" value="Polo-box domain"/>
    <property type="match status" value="1"/>
</dbReference>
<dbReference type="SUPFAM" id="SSF56112">
    <property type="entry name" value="Protein kinase-like (PK-like)"/>
    <property type="match status" value="1"/>
</dbReference>
<dbReference type="PROSITE" id="PS51984">
    <property type="entry name" value="CPB1"/>
    <property type="match status" value="1"/>
</dbReference>
<dbReference type="PROSITE" id="PS51985">
    <property type="entry name" value="CPB2"/>
    <property type="match status" value="1"/>
</dbReference>
<dbReference type="PROSITE" id="PS50078">
    <property type="entry name" value="POLO_BOX"/>
    <property type="match status" value="1"/>
</dbReference>
<dbReference type="PROSITE" id="PS00107">
    <property type="entry name" value="PROTEIN_KINASE_ATP"/>
    <property type="match status" value="1"/>
</dbReference>
<dbReference type="PROSITE" id="PS50011">
    <property type="entry name" value="PROTEIN_KINASE_DOM"/>
    <property type="match status" value="1"/>
</dbReference>
<proteinExistence type="evidence at transcript level"/>
<name>PLK4_XENLA</name>
<comment type="function">
    <text evidence="2">Serine/threonine-protein kinase that plays a central role in centriole duplication. Able to trigger procentriole formation on the surface of the parental centriole cylinder, leading to the recruitment of centriole biogenesis proteins such as sass6, cpap, ccp110, cep135 and gamma-tubulin. When overexpressed, it is able to induce centrosome amplification through the simultaneous generation of multiple procentrioles adjoining each parental centriole during S phase. Its central role in centriole replication suggests a possible role in tumorigenesis, centrosome aberrations being frequently observed in tumors. Also involved in deuterosome-mediated centriole amplification in multiciliated that can generate more than 100 centrioles (By similarity).</text>
</comment>
<comment type="catalytic activity">
    <reaction>
        <text>L-seryl-[protein] + ATP = O-phospho-L-seryl-[protein] + ADP + H(+)</text>
        <dbReference type="Rhea" id="RHEA:17989"/>
        <dbReference type="Rhea" id="RHEA-COMP:9863"/>
        <dbReference type="Rhea" id="RHEA-COMP:11604"/>
        <dbReference type="ChEBI" id="CHEBI:15378"/>
        <dbReference type="ChEBI" id="CHEBI:29999"/>
        <dbReference type="ChEBI" id="CHEBI:30616"/>
        <dbReference type="ChEBI" id="CHEBI:83421"/>
        <dbReference type="ChEBI" id="CHEBI:456216"/>
        <dbReference type="EC" id="2.7.11.21"/>
    </reaction>
</comment>
<comment type="catalytic activity">
    <reaction>
        <text>L-threonyl-[protein] + ATP = O-phospho-L-threonyl-[protein] + ADP + H(+)</text>
        <dbReference type="Rhea" id="RHEA:46608"/>
        <dbReference type="Rhea" id="RHEA-COMP:11060"/>
        <dbReference type="Rhea" id="RHEA-COMP:11605"/>
        <dbReference type="ChEBI" id="CHEBI:15378"/>
        <dbReference type="ChEBI" id="CHEBI:30013"/>
        <dbReference type="ChEBI" id="CHEBI:30616"/>
        <dbReference type="ChEBI" id="CHEBI:61977"/>
        <dbReference type="ChEBI" id="CHEBI:456216"/>
        <dbReference type="EC" id="2.7.11.21"/>
    </reaction>
</comment>
<comment type="subunit">
    <text evidence="1 3">Homodimer.</text>
</comment>
<comment type="subcellular location">
    <subcellularLocation>
        <location evidence="2">Cytoplasm</location>
        <location evidence="2">Cytoskeleton</location>
        <location evidence="2">Microtubule organizing center</location>
        <location evidence="2">Centrosome</location>
        <location evidence="2">Centriole</location>
    </subcellularLocation>
    <subcellularLocation>
        <location evidence="2">Cytoplasm</location>
        <location evidence="2">Cytoskeleton</location>
        <location evidence="2">Microtubule organizing center</location>
        <location evidence="2">Centrosome</location>
    </subcellularLocation>
    <text evidence="1 9">Associates with centrioles throughout the cell cycle (By similarity). Component of the deuterosome, a structure that promotes de novo centriole amplification in multiciliated cells that can generate more than 100 centrioles.</text>
</comment>
<comment type="PTM">
    <text evidence="3">Ubiquitinated; leading to its degradation by the proteasome.</text>
</comment>
<comment type="similarity">
    <text evidence="5 6 7">Belongs to the protein kinase superfamily. Ser/Thr protein kinase family. CDC5/Polo subfamily.</text>
</comment>
<evidence type="ECO:0000250" key="1"/>
<evidence type="ECO:0000250" key="2">
    <source>
        <dbReference type="UniProtKB" id="O00444"/>
    </source>
</evidence>
<evidence type="ECO:0000250" key="3">
    <source>
        <dbReference type="UniProtKB" id="Q64702"/>
    </source>
</evidence>
<evidence type="ECO:0000255" key="4">
    <source>
        <dbReference type="PROSITE-ProRule" id="PRU00154"/>
    </source>
</evidence>
<evidence type="ECO:0000255" key="5">
    <source>
        <dbReference type="PROSITE-ProRule" id="PRU00159"/>
    </source>
</evidence>
<evidence type="ECO:0000255" key="6">
    <source>
        <dbReference type="PROSITE-ProRule" id="PRU01328"/>
    </source>
</evidence>
<evidence type="ECO:0000255" key="7">
    <source>
        <dbReference type="PROSITE-ProRule" id="PRU01329"/>
    </source>
</evidence>
<evidence type="ECO:0000256" key="8">
    <source>
        <dbReference type="SAM" id="MobiDB-lite"/>
    </source>
</evidence>
<evidence type="ECO:0000269" key="9">
    <source>
    </source>
</evidence>
<reference key="1">
    <citation type="submission" date="2003-10" db="EMBL/GenBank/DDBJ databases">
        <authorList>
            <consortium name="NIH - Xenopus Gene Collection (XGC) project"/>
        </authorList>
    </citation>
    <scope>NUCLEOTIDE SEQUENCE [LARGE SCALE MRNA]</scope>
    <source>
        <tissue>Embryo</tissue>
    </source>
</reference>
<reference key="2">
    <citation type="journal article" date="2013" name="Dev. Cell">
        <title>Deuterosome-mediated centriole biogenesis.</title>
        <authorList>
            <person name="Klos Dehring D.A."/>
            <person name="Vladar E.K."/>
            <person name="Werner M.E."/>
            <person name="Mitchell J.W."/>
            <person name="Hwang P."/>
            <person name="Mitchell B.J."/>
        </authorList>
    </citation>
    <scope>SUBCELLULAR LOCATION</scope>
</reference>
<organism>
    <name type="scientific">Xenopus laevis</name>
    <name type="common">African clawed frog</name>
    <dbReference type="NCBI Taxonomy" id="8355"/>
    <lineage>
        <taxon>Eukaryota</taxon>
        <taxon>Metazoa</taxon>
        <taxon>Chordata</taxon>
        <taxon>Craniata</taxon>
        <taxon>Vertebrata</taxon>
        <taxon>Euteleostomi</taxon>
        <taxon>Amphibia</taxon>
        <taxon>Batrachia</taxon>
        <taxon>Anura</taxon>
        <taxon>Pipoidea</taxon>
        <taxon>Pipidae</taxon>
        <taxon>Xenopodinae</taxon>
        <taxon>Xenopus</taxon>
        <taxon>Xenopus</taxon>
    </lineage>
</organism>
<gene>
    <name evidence="2" type="primary">plk4</name>
    <name type="synonym">sak</name>
</gene>
<sequence length="944" mass="105640">MAGSIGERREDFKVLNLLGKGSFACVYRAQSINTGIDVAIKMIDKKAMQKVGMVQRVRNEVEIHCQLKHPSILELYNYFEDSNYVYLILEMCHNGEVNRYLKNRKKPFAEDEARHFMHQIVTGMLYLHSHGILHRDLTLSNLLLSSDMNIKIADFGLATQLKMPNEKHFTMCGTPNYIAPEIATRSAHGLESDVWSLGCMLYTFLVGRPPFDTDTVKNTLNKIVLADYEMPDFVSREAKDLIFQLLRKNPADRLSLSSVLDHAFMTGFSNVQSKVMGAVEDSMDSGHATISTGFTGSSGVSISGRFQEKRILSGPSLPNKVNIFQFKDKHPTERSNGGSFHNTQRENNDFSEGNGRKPVACEDRPHSRYLRRAHSSDRSGTSQSQTYAKPSSYSERCHSVEMLAKPTHLKGYRTSSPPNSYGDIPQMFTDERSLERHTSPPVKEKTPSEFMGPAKQTAPRSNDKAETVQQWFGAMQLNGQFKNTPDTSSVSNMGGDFYSQQATQNGAPQYAWNDVKRKKNTDSSIESVLLGIKKNPGTGQRKAEKSQFGEQSKSRVPQQAFGSSTLRSIISPLNAERLKPIRQKTKNAVVSILESGEVCMEFLKEQNSQERVKEVLRISCDGNLIYVYHPNEGKGFPLVDRPPSPPENRLSYTFDSLPEKYWKKYQYAAKFIKLVRSKTPKVTYYTRYAKCMLMENSPTADVEVCFYDGAKIHKTSDVIRVIEKSGRSYTLEGSRLSTLSDEVRSYLDHANESHCVCLSLESAINTEEKKGENISLFPITFGRRPALAESPKTQPTPSVDSARERKEEQSYVNRVLHGSAASPPQMPNLNPSLISYDGSVFSATTVQPSPTSNIHNTPDHAQVLKSVFVENVGWASQLNSGAVWVQFNDGSQLVVQPGVSSIIYTAPNGQITRHGENDKLPEYIKSKLQCLSSILMLFASSSSR</sequence>
<feature type="chain" id="PRO_0000385283" description="Serine/threonine-protein kinase PLK4">
    <location>
        <begin position="1"/>
        <end position="944"/>
    </location>
</feature>
<feature type="domain" description="Protein kinase" evidence="5">
    <location>
        <begin position="12"/>
        <end position="265"/>
    </location>
</feature>
<feature type="domain" description="Cryptic POLO box 1 (CPB1)" evidence="6">
    <location>
        <begin position="565"/>
        <end position="678"/>
    </location>
</feature>
<feature type="domain" description="Cryptic POLO box 2 (CPB2)" evidence="7">
    <location>
        <begin position="679"/>
        <end position="791"/>
    </location>
</feature>
<feature type="domain" description="POLO box" evidence="4">
    <location>
        <begin position="862"/>
        <end position="940"/>
    </location>
</feature>
<feature type="region of interest" description="Disordered" evidence="8">
    <location>
        <begin position="327"/>
        <end position="396"/>
    </location>
</feature>
<feature type="region of interest" description="Disordered" evidence="8">
    <location>
        <begin position="432"/>
        <end position="463"/>
    </location>
</feature>
<feature type="region of interest" description="Disordered" evidence="8">
    <location>
        <begin position="530"/>
        <end position="561"/>
    </location>
</feature>
<feature type="region of interest" description="Disordered" evidence="8">
    <location>
        <begin position="786"/>
        <end position="809"/>
    </location>
</feature>
<feature type="compositionally biased region" description="Polar residues" evidence="8">
    <location>
        <begin position="378"/>
        <end position="394"/>
    </location>
</feature>
<feature type="compositionally biased region" description="Basic and acidic residues" evidence="8">
    <location>
        <begin position="432"/>
        <end position="447"/>
    </location>
</feature>
<feature type="compositionally biased region" description="Polar residues" evidence="8">
    <location>
        <begin position="548"/>
        <end position="561"/>
    </location>
</feature>
<feature type="active site" description="Proton acceptor" evidence="5">
    <location>
        <position position="136"/>
    </location>
</feature>
<feature type="binding site" evidence="5">
    <location>
        <begin position="18"/>
        <end position="26"/>
    </location>
    <ligand>
        <name>ATP</name>
        <dbReference type="ChEBI" id="CHEBI:30616"/>
    </ligand>
</feature>
<feature type="binding site" evidence="5">
    <location>
        <position position="41"/>
    </location>
    <ligand>
        <name>ATP</name>
        <dbReference type="ChEBI" id="CHEBI:30616"/>
    </ligand>
</feature>
<accession>Q6PAD2</accession>
<protein>
    <recommendedName>
        <fullName evidence="2">Serine/threonine-protein kinase PLK4</fullName>
        <ecNumber evidence="2">2.7.11.21</ecNumber>
    </recommendedName>
    <alternativeName>
        <fullName>Polo-like kinase 4</fullName>
        <shortName>PLK-4</shortName>
    </alternativeName>
    <alternativeName>
        <fullName>Serine/threonine-protein kinase Sak</fullName>
    </alternativeName>
</protein>